<accession>Q55E39</accession>
<reference key="1">
    <citation type="journal article" date="2005" name="Nature">
        <title>The genome of the social amoeba Dictyostelium discoideum.</title>
        <authorList>
            <person name="Eichinger L."/>
            <person name="Pachebat J.A."/>
            <person name="Gloeckner G."/>
            <person name="Rajandream M.A."/>
            <person name="Sucgang R."/>
            <person name="Berriman M."/>
            <person name="Song J."/>
            <person name="Olsen R."/>
            <person name="Szafranski K."/>
            <person name="Xu Q."/>
            <person name="Tunggal B."/>
            <person name="Kummerfeld S."/>
            <person name="Madera M."/>
            <person name="Konfortov B.A."/>
            <person name="Rivero F."/>
            <person name="Bankier A.T."/>
            <person name="Lehmann R."/>
            <person name="Hamlin N."/>
            <person name="Davies R."/>
            <person name="Gaudet P."/>
            <person name="Fey P."/>
            <person name="Pilcher K."/>
            <person name="Chen G."/>
            <person name="Saunders D."/>
            <person name="Sodergren E.J."/>
            <person name="Davis P."/>
            <person name="Kerhornou A."/>
            <person name="Nie X."/>
            <person name="Hall N."/>
            <person name="Anjard C."/>
            <person name="Hemphill L."/>
            <person name="Bason N."/>
            <person name="Farbrother P."/>
            <person name="Desany B."/>
            <person name="Just E."/>
            <person name="Morio T."/>
            <person name="Rost R."/>
            <person name="Churcher C.M."/>
            <person name="Cooper J."/>
            <person name="Haydock S."/>
            <person name="van Driessche N."/>
            <person name="Cronin A."/>
            <person name="Goodhead I."/>
            <person name="Muzny D.M."/>
            <person name="Mourier T."/>
            <person name="Pain A."/>
            <person name="Lu M."/>
            <person name="Harper D."/>
            <person name="Lindsay R."/>
            <person name="Hauser H."/>
            <person name="James K.D."/>
            <person name="Quiles M."/>
            <person name="Madan Babu M."/>
            <person name="Saito T."/>
            <person name="Buchrieser C."/>
            <person name="Wardroper A."/>
            <person name="Felder M."/>
            <person name="Thangavelu M."/>
            <person name="Johnson D."/>
            <person name="Knights A."/>
            <person name="Loulseged H."/>
            <person name="Mungall K.L."/>
            <person name="Oliver K."/>
            <person name="Price C."/>
            <person name="Quail M.A."/>
            <person name="Urushihara H."/>
            <person name="Hernandez J."/>
            <person name="Rabbinowitsch E."/>
            <person name="Steffen D."/>
            <person name="Sanders M."/>
            <person name="Ma J."/>
            <person name="Kohara Y."/>
            <person name="Sharp S."/>
            <person name="Simmonds M.N."/>
            <person name="Spiegler S."/>
            <person name="Tivey A."/>
            <person name="Sugano S."/>
            <person name="White B."/>
            <person name="Walker D."/>
            <person name="Woodward J.R."/>
            <person name="Winckler T."/>
            <person name="Tanaka Y."/>
            <person name="Shaulsky G."/>
            <person name="Schleicher M."/>
            <person name="Weinstock G.M."/>
            <person name="Rosenthal A."/>
            <person name="Cox E.C."/>
            <person name="Chisholm R.L."/>
            <person name="Gibbs R.A."/>
            <person name="Loomis W.F."/>
            <person name="Platzer M."/>
            <person name="Kay R.R."/>
            <person name="Williams J.G."/>
            <person name="Dear P.H."/>
            <person name="Noegel A.A."/>
            <person name="Barrell B.G."/>
            <person name="Kuspa A."/>
        </authorList>
    </citation>
    <scope>NUCLEOTIDE SEQUENCE [LARGE SCALE GENOMIC DNA]</scope>
    <source>
        <strain>AX4</strain>
    </source>
</reference>
<sequence>MAKNKDDEESYCGGGGYWDMVEDLEEEICFDAQEVIPNLYIGSISAATCTTSLKEHKITHILSISTNPPKIKEFTTLCINIEDESQKDISSYFQQCHGFIENGRKLGGILVHCSAGVSRSASVVISYLMSVFFKPFWYCMQYLRNIRPCIQPNTGFINQLINYEATILKNQNVISTTTTTTTTTTITKKKLISNDCNNDDNSSGGSGGGMES</sequence>
<dbReference type="EC" id="3.1.3.16"/>
<dbReference type="EC" id="3.1.3.48"/>
<dbReference type="EMBL" id="AAFI02000005">
    <property type="protein sequence ID" value="EAL72052.1"/>
    <property type="molecule type" value="Genomic_DNA"/>
</dbReference>
<dbReference type="RefSeq" id="XP_645942.1">
    <property type="nucleotide sequence ID" value="XM_640850.1"/>
</dbReference>
<dbReference type="SMR" id="Q55E39"/>
<dbReference type="FunCoup" id="Q55E39">
    <property type="interactions" value="26"/>
</dbReference>
<dbReference type="STRING" id="44689.Q55E39"/>
<dbReference type="EnsemblProtists" id="EAL72052">
    <property type="protein sequence ID" value="EAL72052"/>
    <property type="gene ID" value="DDB_G0269404"/>
</dbReference>
<dbReference type="GeneID" id="8616886"/>
<dbReference type="KEGG" id="ddi:DDB_G0269404"/>
<dbReference type="dictyBase" id="DDB_G0269404">
    <property type="gene designation" value="dspA"/>
</dbReference>
<dbReference type="VEuPathDB" id="AmoebaDB:DDB_G0269404"/>
<dbReference type="InParanoid" id="Q55E39"/>
<dbReference type="OMA" id="IYPNRHF"/>
<dbReference type="PhylomeDB" id="Q55E39"/>
<dbReference type="PRO" id="PR:Q55E39"/>
<dbReference type="Proteomes" id="UP000002195">
    <property type="component" value="Chromosome 1"/>
</dbReference>
<dbReference type="GO" id="GO:0005829">
    <property type="term" value="C:cytosol"/>
    <property type="evidence" value="ECO:0000318"/>
    <property type="project" value="GO_Central"/>
</dbReference>
<dbReference type="GO" id="GO:0005815">
    <property type="term" value="C:microtubule organizing center"/>
    <property type="evidence" value="ECO:0000314"/>
    <property type="project" value="dictyBase"/>
</dbReference>
<dbReference type="GO" id="GO:0004722">
    <property type="term" value="F:protein serine/threonine phosphatase activity"/>
    <property type="evidence" value="ECO:0007669"/>
    <property type="project" value="UniProtKB-EC"/>
</dbReference>
<dbReference type="GO" id="GO:0004725">
    <property type="term" value="F:protein tyrosine phosphatase activity"/>
    <property type="evidence" value="ECO:0000318"/>
    <property type="project" value="GO_Central"/>
</dbReference>
<dbReference type="GO" id="GO:0007165">
    <property type="term" value="P:signal transduction"/>
    <property type="evidence" value="ECO:0000318"/>
    <property type="project" value="GO_Central"/>
</dbReference>
<dbReference type="CDD" id="cd14498">
    <property type="entry name" value="DSP"/>
    <property type="match status" value="1"/>
</dbReference>
<dbReference type="FunFam" id="3.90.190.10:FF:000161">
    <property type="entry name" value="Probable dual specificity protein phosphatase DDB_G0269404"/>
    <property type="match status" value="1"/>
</dbReference>
<dbReference type="Gene3D" id="3.90.190.10">
    <property type="entry name" value="Protein tyrosine phosphatase superfamily"/>
    <property type="match status" value="1"/>
</dbReference>
<dbReference type="InterPro" id="IPR000340">
    <property type="entry name" value="Dual-sp_phosphatase_cat-dom"/>
</dbReference>
<dbReference type="InterPro" id="IPR029021">
    <property type="entry name" value="Prot-tyrosine_phosphatase-like"/>
</dbReference>
<dbReference type="InterPro" id="IPR016130">
    <property type="entry name" value="Tyr_Pase_AS"/>
</dbReference>
<dbReference type="InterPro" id="IPR000387">
    <property type="entry name" value="Tyr_Pase_dom"/>
</dbReference>
<dbReference type="InterPro" id="IPR020422">
    <property type="entry name" value="TYR_PHOSPHATASE_DUAL_dom"/>
</dbReference>
<dbReference type="PANTHER" id="PTHR45948:SF2">
    <property type="entry name" value="DUAL SPECIFICITY PROTEIN PHOSPHATASE"/>
    <property type="match status" value="1"/>
</dbReference>
<dbReference type="PANTHER" id="PTHR45948">
    <property type="entry name" value="DUAL SPECIFICITY PROTEIN PHOSPHATASE DDB_G0269404-RELATED"/>
    <property type="match status" value="1"/>
</dbReference>
<dbReference type="Pfam" id="PF00782">
    <property type="entry name" value="DSPc"/>
    <property type="match status" value="1"/>
</dbReference>
<dbReference type="SMART" id="SM00195">
    <property type="entry name" value="DSPc"/>
    <property type="match status" value="1"/>
</dbReference>
<dbReference type="SUPFAM" id="SSF52799">
    <property type="entry name" value="(Phosphotyrosine protein) phosphatases II"/>
    <property type="match status" value="1"/>
</dbReference>
<dbReference type="PROSITE" id="PS00383">
    <property type="entry name" value="TYR_PHOSPHATASE_1"/>
    <property type="match status" value="1"/>
</dbReference>
<dbReference type="PROSITE" id="PS50056">
    <property type="entry name" value="TYR_PHOSPHATASE_2"/>
    <property type="match status" value="1"/>
</dbReference>
<dbReference type="PROSITE" id="PS50054">
    <property type="entry name" value="TYR_PHOSPHATASE_DUAL"/>
    <property type="match status" value="1"/>
</dbReference>
<feature type="chain" id="PRO_0000332950" description="Probable dual specificity protein phosphatase DDB_G0269404">
    <location>
        <begin position="1"/>
        <end position="212"/>
    </location>
</feature>
<feature type="domain" description="Tyrosine-protein phosphatase" evidence="2">
    <location>
        <begin position="30"/>
        <end position="169"/>
    </location>
</feature>
<feature type="active site" description="Phosphocysteine intermediate" evidence="2">
    <location>
        <position position="113"/>
    </location>
</feature>
<comment type="function">
    <text evidence="1">Has a dual specificity toward Ser/Thr and Tyr-containing proteins.</text>
</comment>
<comment type="catalytic activity">
    <reaction evidence="3">
        <text>O-phospho-L-tyrosyl-[protein] + H2O = L-tyrosyl-[protein] + phosphate</text>
        <dbReference type="Rhea" id="RHEA:10684"/>
        <dbReference type="Rhea" id="RHEA-COMP:10136"/>
        <dbReference type="Rhea" id="RHEA-COMP:20101"/>
        <dbReference type="ChEBI" id="CHEBI:15377"/>
        <dbReference type="ChEBI" id="CHEBI:43474"/>
        <dbReference type="ChEBI" id="CHEBI:46858"/>
        <dbReference type="ChEBI" id="CHEBI:61978"/>
        <dbReference type="EC" id="3.1.3.48"/>
    </reaction>
</comment>
<comment type="catalytic activity">
    <reaction>
        <text>O-phospho-L-seryl-[protein] + H2O = L-seryl-[protein] + phosphate</text>
        <dbReference type="Rhea" id="RHEA:20629"/>
        <dbReference type="Rhea" id="RHEA-COMP:9863"/>
        <dbReference type="Rhea" id="RHEA-COMP:11604"/>
        <dbReference type="ChEBI" id="CHEBI:15377"/>
        <dbReference type="ChEBI" id="CHEBI:29999"/>
        <dbReference type="ChEBI" id="CHEBI:43474"/>
        <dbReference type="ChEBI" id="CHEBI:83421"/>
        <dbReference type="EC" id="3.1.3.16"/>
    </reaction>
</comment>
<comment type="catalytic activity">
    <reaction>
        <text>O-phospho-L-threonyl-[protein] + H2O = L-threonyl-[protein] + phosphate</text>
        <dbReference type="Rhea" id="RHEA:47004"/>
        <dbReference type="Rhea" id="RHEA-COMP:11060"/>
        <dbReference type="Rhea" id="RHEA-COMP:11605"/>
        <dbReference type="ChEBI" id="CHEBI:15377"/>
        <dbReference type="ChEBI" id="CHEBI:30013"/>
        <dbReference type="ChEBI" id="CHEBI:43474"/>
        <dbReference type="ChEBI" id="CHEBI:61977"/>
        <dbReference type="EC" id="3.1.3.16"/>
    </reaction>
</comment>
<comment type="similarity">
    <text evidence="4">Belongs to the protein-tyrosine phosphatase family. Non-receptor class dual specificity subfamily.</text>
</comment>
<evidence type="ECO:0000250" key="1"/>
<evidence type="ECO:0000255" key="2">
    <source>
        <dbReference type="PROSITE-ProRule" id="PRU00160"/>
    </source>
</evidence>
<evidence type="ECO:0000255" key="3">
    <source>
        <dbReference type="PROSITE-ProRule" id="PRU10044"/>
    </source>
</evidence>
<evidence type="ECO:0000305" key="4"/>
<organism>
    <name type="scientific">Dictyostelium discoideum</name>
    <name type="common">Social amoeba</name>
    <dbReference type="NCBI Taxonomy" id="44689"/>
    <lineage>
        <taxon>Eukaryota</taxon>
        <taxon>Amoebozoa</taxon>
        <taxon>Evosea</taxon>
        <taxon>Eumycetozoa</taxon>
        <taxon>Dictyostelia</taxon>
        <taxon>Dictyosteliales</taxon>
        <taxon>Dictyosteliaceae</taxon>
        <taxon>Dictyostelium</taxon>
    </lineage>
</organism>
<proteinExistence type="inferred from homology"/>
<name>DUSP1_DICDI</name>
<keyword id="KW-0378">Hydrolase</keyword>
<keyword id="KW-0904">Protein phosphatase</keyword>
<keyword id="KW-1185">Reference proteome</keyword>
<gene>
    <name type="ORF">DDB_G0269404</name>
</gene>
<protein>
    <recommendedName>
        <fullName>Probable dual specificity protein phosphatase DDB_G0269404</fullName>
        <ecNumber>3.1.3.16</ecNumber>
        <ecNumber>3.1.3.48</ecNumber>
    </recommendedName>
</protein>